<proteinExistence type="evidence at protein level"/>
<name>LPRG_MYCLE</name>
<organism>
    <name type="scientific">Mycobacterium leprae (strain TN)</name>
    <dbReference type="NCBI Taxonomy" id="272631"/>
    <lineage>
        <taxon>Bacteria</taxon>
        <taxon>Bacillati</taxon>
        <taxon>Actinomycetota</taxon>
        <taxon>Actinomycetes</taxon>
        <taxon>Mycobacteriales</taxon>
        <taxon>Mycobacteriaceae</taxon>
        <taxon>Mycobacterium</taxon>
    </lineage>
</organism>
<comment type="function">
    <text evidence="1">Helps membrane protein ML0556 (P55) transport triacylglycerides (TAG) across the inner cell membrane into the periplasm and probably ultimately to the outer membrane (By similarity). Binds TAG in its hydrophobic cavity and transfers it between lipid bilayers (By similarity). TAG probably regulates lipid metabolism and growth regulation and plays a structural role in the outer membrane (By similarity). Binds di- and triacylated phosphatidyl-myo-inositol mannosides (PIMs), and glycolipid lipoglycan modulins lipoarabinomannan (LAM) and lipomannan (LM), facilitating their recognition by TLR2. Required for activity of drug efflux transporter ML0556. Required, probably with ML0556, for normal surface localization of LAM.</text>
</comment>
<comment type="function">
    <text evidence="4">Constitutes a host TLR2 agonist (toll-like receptor) able to stimulate proliferation of CD4+ T-cells derived from a human leprosy patient following protein processing/presentation by MHC class II molecules in peripheral blood mononuclear cells.</text>
</comment>
<comment type="subcellular location">
    <subcellularLocation>
        <location evidence="3">Cell inner membrane</location>
        <topology evidence="3">Lipid-anchor</topology>
        <orientation evidence="6">Periplasmic side</orientation>
    </subcellularLocation>
    <subcellularLocation>
        <location evidence="1">Secreted</location>
        <location evidence="1">Cell wall</location>
    </subcellularLocation>
    <subcellularLocation>
        <location evidence="1">Secreted</location>
    </subcellularLocation>
</comment>
<comment type="domain">
    <text evidence="1">Forms a U-shaped beta-half-barrel with a small hydrophobic cavity able to hold a triacylated lipid or triacylglyceride (By similarity). A flexible lid region may move to accommodate different TAG molecules (By similarity).</text>
</comment>
<comment type="PTM">
    <text evidence="2 4">Modified by Lgt on Cys-27 with an S-linked diacylglyceral, signal peptide is removed by LspA, Cys-27 is further modifed with a fatty acid on its amino group by Lnt yielding a triacylated protein (By similarity). Probably glycosylated, which is required for T-cell activation (PubMed:18424702).</text>
</comment>
<comment type="miscellaneous">
    <text evidence="6">Bacterial LAM blocks host cell phagosome-lysosome fusion and is one way in which Mycobacteria evade the host immune system.</text>
</comment>
<comment type="miscellaneous">
    <text evidence="6">Triacylglycerides accumulate in lipid droplets in the cytoplasm of M.leprae, and are used as an energy source during starvation.</text>
</comment>
<comment type="similarity">
    <text evidence="6">Belongs to the LppX/LprAFG lipoprotein family.</text>
</comment>
<keyword id="KW-0997">Cell inner membrane</keyword>
<keyword id="KW-1003">Cell membrane</keyword>
<keyword id="KW-0134">Cell wall</keyword>
<keyword id="KW-0325">Glycoprotein</keyword>
<keyword id="KW-0445">Lipid transport</keyword>
<keyword id="KW-0446">Lipid-binding</keyword>
<keyword id="KW-0449">Lipoprotein</keyword>
<keyword id="KW-0472">Membrane</keyword>
<keyword id="KW-0564">Palmitate</keyword>
<keyword id="KW-1185">Reference proteome</keyword>
<keyword id="KW-0964">Secreted</keyword>
<keyword id="KW-0732">Signal</keyword>
<keyword id="KW-0813">Transport</keyword>
<accession>Q9CCP6</accession>
<dbReference type="EMBL" id="AL583918">
    <property type="protein sequence ID" value="CAC30065.1"/>
    <property type="molecule type" value="Genomic_DNA"/>
</dbReference>
<dbReference type="PIR" id="E86978">
    <property type="entry name" value="E86978"/>
</dbReference>
<dbReference type="RefSeq" id="NP_301471.1">
    <property type="nucleotide sequence ID" value="NC_002677.1"/>
</dbReference>
<dbReference type="RefSeq" id="WP_010907795.1">
    <property type="nucleotide sequence ID" value="NC_002677.1"/>
</dbReference>
<dbReference type="SMR" id="Q9CCP6"/>
<dbReference type="STRING" id="272631.gene:17574378"/>
<dbReference type="KEGG" id="mle:ML0557"/>
<dbReference type="PATRIC" id="fig|272631.5.peg.968"/>
<dbReference type="Leproma" id="ML0557"/>
<dbReference type="eggNOG" id="ENOG50338Y0">
    <property type="taxonomic scope" value="Bacteria"/>
</dbReference>
<dbReference type="HOGENOM" id="CLU_074100_1_0_11"/>
<dbReference type="OrthoDB" id="4763237at2"/>
<dbReference type="Proteomes" id="UP000000806">
    <property type="component" value="Chromosome"/>
</dbReference>
<dbReference type="GO" id="GO:0005576">
    <property type="term" value="C:extracellular region"/>
    <property type="evidence" value="ECO:0007669"/>
    <property type="project" value="UniProtKB-SubCell"/>
</dbReference>
<dbReference type="GO" id="GO:0005886">
    <property type="term" value="C:plasma membrane"/>
    <property type="evidence" value="ECO:0007669"/>
    <property type="project" value="UniProtKB-SubCell"/>
</dbReference>
<dbReference type="GO" id="GO:0008289">
    <property type="term" value="F:lipid binding"/>
    <property type="evidence" value="ECO:0007669"/>
    <property type="project" value="UniProtKB-KW"/>
</dbReference>
<dbReference type="GO" id="GO:0006869">
    <property type="term" value="P:lipid transport"/>
    <property type="evidence" value="ECO:0007669"/>
    <property type="project" value="UniProtKB-KW"/>
</dbReference>
<dbReference type="CDD" id="cd16334">
    <property type="entry name" value="LppX-like"/>
    <property type="match status" value="1"/>
</dbReference>
<dbReference type="Gene3D" id="2.50.20.20">
    <property type="match status" value="1"/>
</dbReference>
<dbReference type="InterPro" id="IPR029046">
    <property type="entry name" value="LolA/LolB/LppX"/>
</dbReference>
<dbReference type="InterPro" id="IPR009830">
    <property type="entry name" value="LppX/LprAFG"/>
</dbReference>
<dbReference type="Pfam" id="PF07161">
    <property type="entry name" value="LppX_LprAFG"/>
    <property type="match status" value="1"/>
</dbReference>
<dbReference type="SUPFAM" id="SSF89392">
    <property type="entry name" value="Prokaryotic lipoproteins and lipoprotein localization factors"/>
    <property type="match status" value="1"/>
</dbReference>
<dbReference type="PROSITE" id="PS51257">
    <property type="entry name" value="PROKAR_LIPOPROTEIN"/>
    <property type="match status" value="1"/>
</dbReference>
<sequence>MQAPKHHRRLFAVLATLNTATAVIAGCSSGSNLSSGPLPDATTWVKQATDITKNVTSAHLVLSVNGKITGLPVKTLTGDLTTHPNTVASGNATITLDGADLNANFVVVDGELYATLTPSKWSDFGKASDIYDVASILNPDAGLANVLANFTGAKTEGRDSINGQSAVRISGNVSADAVNKIAPPFNATQPMPATVWIQETGDHQLAQIRIDNKSSGNSVQMTLSNWDEPVQVTKPQVS</sequence>
<reference key="1">
    <citation type="journal article" date="2001" name="Nature">
        <title>Massive gene decay in the leprosy bacillus.</title>
        <authorList>
            <person name="Cole S.T."/>
            <person name="Eiglmeier K."/>
            <person name="Parkhill J."/>
            <person name="James K.D."/>
            <person name="Thomson N.R."/>
            <person name="Wheeler P.R."/>
            <person name="Honore N."/>
            <person name="Garnier T."/>
            <person name="Churcher C.M."/>
            <person name="Harris D.E."/>
            <person name="Mungall K.L."/>
            <person name="Basham D."/>
            <person name="Brown D."/>
            <person name="Chillingworth T."/>
            <person name="Connor R."/>
            <person name="Davies R.M."/>
            <person name="Devlin K."/>
            <person name="Duthoy S."/>
            <person name="Feltwell T."/>
            <person name="Fraser A."/>
            <person name="Hamlin N."/>
            <person name="Holroyd S."/>
            <person name="Hornsby T."/>
            <person name="Jagels K."/>
            <person name="Lacroix C."/>
            <person name="Maclean J."/>
            <person name="Moule S."/>
            <person name="Murphy L.D."/>
            <person name="Oliver K."/>
            <person name="Quail M.A."/>
            <person name="Rajandream M.A."/>
            <person name="Rutherford K.M."/>
            <person name="Rutter S."/>
            <person name="Seeger K."/>
            <person name="Simon S."/>
            <person name="Simmonds M."/>
            <person name="Skelton J."/>
            <person name="Squares R."/>
            <person name="Squares S."/>
            <person name="Stevens K."/>
            <person name="Taylor K."/>
            <person name="Whitehead S."/>
            <person name="Woodward J.R."/>
            <person name="Barrell B.G."/>
        </authorList>
    </citation>
    <scope>NUCLEOTIDE SEQUENCE [LARGE SCALE GENOMIC DNA]</scope>
    <source>
        <strain>TN</strain>
    </source>
</reference>
<reference key="2">
    <citation type="journal article" date="2008" name="J. Immunol.">
        <title>Conserved mycobacterial lipoglycoproteins activate TLR2 but also require glycosylation for MHC class II-restricted T cell activation.</title>
        <authorList>
            <person name="Sieling P.A."/>
            <person name="Hill P.J."/>
            <person name="Dobos K.M."/>
            <person name="Brookman K."/>
            <person name="Kuhlman A.M."/>
            <person name="Fabri M."/>
            <person name="Krutzik S.R."/>
            <person name="Rea T.H."/>
            <person name="Heaslip D.G."/>
            <person name="Belisle J.T."/>
            <person name="Modlin R.L."/>
        </authorList>
    </citation>
    <scope>FUNCTION IN INFECTION</scope>
    <scope>GLYCOSYLATION</scope>
    <source>
        <strain>TN</strain>
    </source>
</reference>
<gene>
    <name evidence="5" type="primary">lprG</name>
    <name type="ordered locus">ML0557</name>
</gene>
<protein>
    <recommendedName>
        <fullName evidence="1">Lipoarabinomannan carrier protein LprG</fullName>
    </recommendedName>
    <alternativeName>
        <fullName>27 kDa lipoprotein</fullName>
    </alternativeName>
    <alternativeName>
        <fullName>Antigen P27</fullName>
    </alternativeName>
    <alternativeName>
        <fullName>Lipoprotein LprG</fullName>
    </alternativeName>
    <alternativeName>
        <fullName>Triacylglyceride transfer protein LprG</fullName>
    </alternativeName>
</protein>
<feature type="signal peptide" evidence="6">
    <location>
        <begin position="1"/>
        <end position="26"/>
    </location>
</feature>
<feature type="chain" id="PRO_0000018145" description="Lipoarabinomannan carrier protein LprG">
    <location>
        <begin position="27"/>
        <end position="238"/>
    </location>
</feature>
<feature type="lipid moiety-binding region" description="N-palmitoyl cysteine" evidence="3">
    <location>
        <position position="27"/>
    </location>
</feature>
<feature type="lipid moiety-binding region" description="S-diacylglycerol cysteine" evidence="3">
    <location>
        <position position="27"/>
    </location>
</feature>
<evidence type="ECO:0000250" key="1">
    <source>
        <dbReference type="UniProtKB" id="P9WK45"/>
    </source>
</evidence>
<evidence type="ECO:0000250" key="2">
    <source>
        <dbReference type="UniProtKB" id="P9WK47"/>
    </source>
</evidence>
<evidence type="ECO:0000255" key="3">
    <source>
        <dbReference type="PROSITE-ProRule" id="PRU00303"/>
    </source>
</evidence>
<evidence type="ECO:0000269" key="4">
    <source>
    </source>
</evidence>
<evidence type="ECO:0000303" key="5">
    <source>
    </source>
</evidence>
<evidence type="ECO:0000305" key="6"/>